<accession>Q82Y45</accession>
<sequence>MLKIYDTLTRSRREFIPLTPGEVRMYVCGMTVYDYCHLGHARVLVVFDSVVRWLQTLGYKVIYVRNITDVDDKIIRRALENHEPFSALTARYIQAMEEDAMALGVISPSFEPRATEYVDSMIAMIESLLNRELAYVASNGDVFYDVRRFPGYGKLSGKSLDDLRAGERVEIDTNKRDPLDFVLWKAAKPDEPSWDSPWGKGRPGWHIECSAMSEHYLGDQFDIHGGGQDLQFPHHENEIAQSEGVHGHSHVNYWMHNGFVRVDNEKMSKSLGNFFTVREVLTRYQPEVVRFFIVRAHYRSPLNYSDAHLNDARSALERLYTVLKNHAPSQDSEVATAVIDWENNVYARRFMSAMNDDFNTPEAVAVLFDLASEANRTGDSHYASLLKALGGVLGLLQQPPQQYLQYPAHLQDGQYSVEEIENMIQQRLQARKERNFAQADTLRQQLAEAGIILEDSPQGTTWRRE</sequence>
<feature type="chain" id="PRO_0000159445" description="Cysteine--tRNA ligase">
    <location>
        <begin position="1"/>
        <end position="465"/>
    </location>
</feature>
<feature type="short sequence motif" description="'HIGH' region">
    <location>
        <begin position="30"/>
        <end position="40"/>
    </location>
</feature>
<feature type="short sequence motif" description="'KMSKS' region">
    <location>
        <begin position="266"/>
        <end position="270"/>
    </location>
</feature>
<feature type="binding site" evidence="1">
    <location>
        <position position="28"/>
    </location>
    <ligand>
        <name>Zn(2+)</name>
        <dbReference type="ChEBI" id="CHEBI:29105"/>
    </ligand>
</feature>
<feature type="binding site" evidence="1">
    <location>
        <position position="209"/>
    </location>
    <ligand>
        <name>Zn(2+)</name>
        <dbReference type="ChEBI" id="CHEBI:29105"/>
    </ligand>
</feature>
<feature type="binding site" evidence="1">
    <location>
        <position position="234"/>
    </location>
    <ligand>
        <name>Zn(2+)</name>
        <dbReference type="ChEBI" id="CHEBI:29105"/>
    </ligand>
</feature>
<feature type="binding site" evidence="1">
    <location>
        <position position="238"/>
    </location>
    <ligand>
        <name>Zn(2+)</name>
        <dbReference type="ChEBI" id="CHEBI:29105"/>
    </ligand>
</feature>
<feature type="binding site" evidence="1">
    <location>
        <position position="269"/>
    </location>
    <ligand>
        <name>ATP</name>
        <dbReference type="ChEBI" id="CHEBI:30616"/>
    </ligand>
</feature>
<name>SYC_NITEU</name>
<keyword id="KW-0030">Aminoacyl-tRNA synthetase</keyword>
<keyword id="KW-0067">ATP-binding</keyword>
<keyword id="KW-0963">Cytoplasm</keyword>
<keyword id="KW-0436">Ligase</keyword>
<keyword id="KW-0479">Metal-binding</keyword>
<keyword id="KW-0547">Nucleotide-binding</keyword>
<keyword id="KW-0648">Protein biosynthesis</keyword>
<keyword id="KW-1185">Reference proteome</keyword>
<keyword id="KW-0862">Zinc</keyword>
<gene>
    <name evidence="1" type="primary">cysS</name>
    <name type="ordered locus">NE0043</name>
</gene>
<reference key="1">
    <citation type="journal article" date="2003" name="J. Bacteriol.">
        <title>Complete genome sequence of the ammonia-oxidizing bacterium and obligate chemolithoautotroph Nitrosomonas europaea.</title>
        <authorList>
            <person name="Chain P."/>
            <person name="Lamerdin J.E."/>
            <person name="Larimer F.W."/>
            <person name="Regala W."/>
            <person name="Lao V."/>
            <person name="Land M.L."/>
            <person name="Hauser L."/>
            <person name="Hooper A.B."/>
            <person name="Klotz M.G."/>
            <person name="Norton J."/>
            <person name="Sayavedra-Soto L.A."/>
            <person name="Arciero D.M."/>
            <person name="Hommes N.G."/>
            <person name="Whittaker M.M."/>
            <person name="Arp D.J."/>
        </authorList>
    </citation>
    <scope>NUCLEOTIDE SEQUENCE [LARGE SCALE GENOMIC DNA]</scope>
    <source>
        <strain>ATCC 19718 / CIP 103999 / KCTC 2705 / NBRC 14298</strain>
    </source>
</reference>
<evidence type="ECO:0000255" key="1">
    <source>
        <dbReference type="HAMAP-Rule" id="MF_00041"/>
    </source>
</evidence>
<dbReference type="EC" id="6.1.1.16" evidence="1"/>
<dbReference type="EMBL" id="AL954747">
    <property type="protein sequence ID" value="CAD83954.1"/>
    <property type="molecule type" value="Genomic_DNA"/>
</dbReference>
<dbReference type="RefSeq" id="WP_011110695.1">
    <property type="nucleotide sequence ID" value="NC_004757.1"/>
</dbReference>
<dbReference type="SMR" id="Q82Y45"/>
<dbReference type="STRING" id="228410.NE0043"/>
<dbReference type="GeneID" id="87103251"/>
<dbReference type="KEGG" id="neu:NE0043"/>
<dbReference type="eggNOG" id="COG0215">
    <property type="taxonomic scope" value="Bacteria"/>
</dbReference>
<dbReference type="HOGENOM" id="CLU_013528_0_1_4"/>
<dbReference type="OrthoDB" id="9815130at2"/>
<dbReference type="PhylomeDB" id="Q82Y45"/>
<dbReference type="Proteomes" id="UP000001416">
    <property type="component" value="Chromosome"/>
</dbReference>
<dbReference type="GO" id="GO:0005829">
    <property type="term" value="C:cytosol"/>
    <property type="evidence" value="ECO:0007669"/>
    <property type="project" value="TreeGrafter"/>
</dbReference>
<dbReference type="GO" id="GO:0005524">
    <property type="term" value="F:ATP binding"/>
    <property type="evidence" value="ECO:0007669"/>
    <property type="project" value="UniProtKB-UniRule"/>
</dbReference>
<dbReference type="GO" id="GO:0004817">
    <property type="term" value="F:cysteine-tRNA ligase activity"/>
    <property type="evidence" value="ECO:0007669"/>
    <property type="project" value="UniProtKB-UniRule"/>
</dbReference>
<dbReference type="GO" id="GO:0008270">
    <property type="term" value="F:zinc ion binding"/>
    <property type="evidence" value="ECO:0007669"/>
    <property type="project" value="UniProtKB-UniRule"/>
</dbReference>
<dbReference type="GO" id="GO:0006423">
    <property type="term" value="P:cysteinyl-tRNA aminoacylation"/>
    <property type="evidence" value="ECO:0007669"/>
    <property type="project" value="UniProtKB-UniRule"/>
</dbReference>
<dbReference type="CDD" id="cd07963">
    <property type="entry name" value="Anticodon_Ia_Cys"/>
    <property type="match status" value="1"/>
</dbReference>
<dbReference type="CDD" id="cd00672">
    <property type="entry name" value="CysRS_core"/>
    <property type="match status" value="1"/>
</dbReference>
<dbReference type="FunFam" id="3.40.50.620:FF:000009">
    <property type="entry name" value="Cysteine--tRNA ligase"/>
    <property type="match status" value="1"/>
</dbReference>
<dbReference type="Gene3D" id="1.20.120.1910">
    <property type="entry name" value="Cysteine-tRNA ligase, C-terminal anti-codon recognition domain"/>
    <property type="match status" value="1"/>
</dbReference>
<dbReference type="Gene3D" id="3.40.50.620">
    <property type="entry name" value="HUPs"/>
    <property type="match status" value="1"/>
</dbReference>
<dbReference type="HAMAP" id="MF_00041">
    <property type="entry name" value="Cys_tRNA_synth"/>
    <property type="match status" value="1"/>
</dbReference>
<dbReference type="InterPro" id="IPR015803">
    <property type="entry name" value="Cys-tRNA-ligase"/>
</dbReference>
<dbReference type="InterPro" id="IPR015273">
    <property type="entry name" value="Cys-tRNA-synt_Ia_DALR"/>
</dbReference>
<dbReference type="InterPro" id="IPR024909">
    <property type="entry name" value="Cys-tRNA/MSH_ligase"/>
</dbReference>
<dbReference type="InterPro" id="IPR056411">
    <property type="entry name" value="CysS_C"/>
</dbReference>
<dbReference type="InterPro" id="IPR014729">
    <property type="entry name" value="Rossmann-like_a/b/a_fold"/>
</dbReference>
<dbReference type="InterPro" id="IPR032678">
    <property type="entry name" value="tRNA-synt_1_cat_dom"/>
</dbReference>
<dbReference type="InterPro" id="IPR009080">
    <property type="entry name" value="tRNAsynth_Ia_anticodon-bd"/>
</dbReference>
<dbReference type="NCBIfam" id="TIGR00435">
    <property type="entry name" value="cysS"/>
    <property type="match status" value="1"/>
</dbReference>
<dbReference type="PANTHER" id="PTHR10890:SF3">
    <property type="entry name" value="CYSTEINE--TRNA LIGASE, CYTOPLASMIC"/>
    <property type="match status" value="1"/>
</dbReference>
<dbReference type="PANTHER" id="PTHR10890">
    <property type="entry name" value="CYSTEINYL-TRNA SYNTHETASE"/>
    <property type="match status" value="1"/>
</dbReference>
<dbReference type="Pfam" id="PF23493">
    <property type="entry name" value="CysS_C"/>
    <property type="match status" value="1"/>
</dbReference>
<dbReference type="Pfam" id="PF09190">
    <property type="entry name" value="DALR_2"/>
    <property type="match status" value="1"/>
</dbReference>
<dbReference type="Pfam" id="PF01406">
    <property type="entry name" value="tRNA-synt_1e"/>
    <property type="match status" value="1"/>
</dbReference>
<dbReference type="PRINTS" id="PR00983">
    <property type="entry name" value="TRNASYNTHCYS"/>
</dbReference>
<dbReference type="SMART" id="SM00840">
    <property type="entry name" value="DALR_2"/>
    <property type="match status" value="1"/>
</dbReference>
<dbReference type="SUPFAM" id="SSF47323">
    <property type="entry name" value="Anticodon-binding domain of a subclass of class I aminoacyl-tRNA synthetases"/>
    <property type="match status" value="1"/>
</dbReference>
<dbReference type="SUPFAM" id="SSF52374">
    <property type="entry name" value="Nucleotidylyl transferase"/>
    <property type="match status" value="1"/>
</dbReference>
<protein>
    <recommendedName>
        <fullName evidence="1">Cysteine--tRNA ligase</fullName>
        <ecNumber evidence="1">6.1.1.16</ecNumber>
    </recommendedName>
    <alternativeName>
        <fullName evidence="1">Cysteinyl-tRNA synthetase</fullName>
        <shortName evidence="1">CysRS</shortName>
    </alternativeName>
</protein>
<proteinExistence type="inferred from homology"/>
<organism>
    <name type="scientific">Nitrosomonas europaea (strain ATCC 19718 / CIP 103999 / KCTC 2705 / NBRC 14298)</name>
    <dbReference type="NCBI Taxonomy" id="228410"/>
    <lineage>
        <taxon>Bacteria</taxon>
        <taxon>Pseudomonadati</taxon>
        <taxon>Pseudomonadota</taxon>
        <taxon>Betaproteobacteria</taxon>
        <taxon>Nitrosomonadales</taxon>
        <taxon>Nitrosomonadaceae</taxon>
        <taxon>Nitrosomonas</taxon>
    </lineage>
</organism>
<comment type="catalytic activity">
    <reaction evidence="1">
        <text>tRNA(Cys) + L-cysteine + ATP = L-cysteinyl-tRNA(Cys) + AMP + diphosphate</text>
        <dbReference type="Rhea" id="RHEA:17773"/>
        <dbReference type="Rhea" id="RHEA-COMP:9661"/>
        <dbReference type="Rhea" id="RHEA-COMP:9679"/>
        <dbReference type="ChEBI" id="CHEBI:30616"/>
        <dbReference type="ChEBI" id="CHEBI:33019"/>
        <dbReference type="ChEBI" id="CHEBI:35235"/>
        <dbReference type="ChEBI" id="CHEBI:78442"/>
        <dbReference type="ChEBI" id="CHEBI:78517"/>
        <dbReference type="ChEBI" id="CHEBI:456215"/>
        <dbReference type="EC" id="6.1.1.16"/>
    </reaction>
</comment>
<comment type="cofactor">
    <cofactor evidence="1">
        <name>Zn(2+)</name>
        <dbReference type="ChEBI" id="CHEBI:29105"/>
    </cofactor>
    <text evidence="1">Binds 1 zinc ion per subunit.</text>
</comment>
<comment type="subunit">
    <text evidence="1">Monomer.</text>
</comment>
<comment type="subcellular location">
    <subcellularLocation>
        <location evidence="1">Cytoplasm</location>
    </subcellularLocation>
</comment>
<comment type="similarity">
    <text evidence="1">Belongs to the class-I aminoacyl-tRNA synthetase family.</text>
</comment>